<proteinExistence type="inferred from homology"/>
<protein>
    <recommendedName>
        <fullName>UPF0146 protein MJ0688</fullName>
    </recommendedName>
</protein>
<comment type="similarity">
    <text evidence="1">Belongs to the UPF0146 family.</text>
</comment>
<comment type="sequence caution" evidence="1">
    <conflict type="erroneous initiation">
        <sequence resource="EMBL-CDS" id="AAB98683"/>
    </conflict>
</comment>
<feature type="chain" id="PRO_0000145094" description="UPF0146 protein MJ0688">
    <location>
        <begin position="1"/>
        <end position="137"/>
    </location>
</feature>
<evidence type="ECO:0000305" key="1"/>
<keyword id="KW-1185">Reference proteome</keyword>
<organism>
    <name type="scientific">Methanocaldococcus jannaschii (strain ATCC 43067 / DSM 2661 / JAL-1 / JCM 10045 / NBRC 100440)</name>
    <name type="common">Methanococcus jannaschii</name>
    <dbReference type="NCBI Taxonomy" id="243232"/>
    <lineage>
        <taxon>Archaea</taxon>
        <taxon>Methanobacteriati</taxon>
        <taxon>Methanobacteriota</taxon>
        <taxon>Methanomada group</taxon>
        <taxon>Methanococci</taxon>
        <taxon>Methanococcales</taxon>
        <taxon>Methanocaldococcaceae</taxon>
        <taxon>Methanocaldococcus</taxon>
    </lineage>
</organism>
<reference key="1">
    <citation type="journal article" date="1996" name="Science">
        <title>Complete genome sequence of the methanogenic archaeon, Methanococcus jannaschii.</title>
        <authorList>
            <person name="Bult C.J."/>
            <person name="White O."/>
            <person name="Olsen G.J."/>
            <person name="Zhou L."/>
            <person name="Fleischmann R.D."/>
            <person name="Sutton G.G."/>
            <person name="Blake J.A."/>
            <person name="FitzGerald L.M."/>
            <person name="Clayton R.A."/>
            <person name="Gocayne J.D."/>
            <person name="Kerlavage A.R."/>
            <person name="Dougherty B.A."/>
            <person name="Tomb J.-F."/>
            <person name="Adams M.D."/>
            <person name="Reich C.I."/>
            <person name="Overbeek R."/>
            <person name="Kirkness E.F."/>
            <person name="Weinstock K.G."/>
            <person name="Merrick J.M."/>
            <person name="Glodek A."/>
            <person name="Scott J.L."/>
            <person name="Geoghagen N.S.M."/>
            <person name="Weidman J.F."/>
            <person name="Fuhrmann J.L."/>
            <person name="Nguyen D."/>
            <person name="Utterback T.R."/>
            <person name="Kelley J.M."/>
            <person name="Peterson J.D."/>
            <person name="Sadow P.W."/>
            <person name="Hanna M.C."/>
            <person name="Cotton M.D."/>
            <person name="Roberts K.M."/>
            <person name="Hurst M.A."/>
            <person name="Kaine B.P."/>
            <person name="Borodovsky M."/>
            <person name="Klenk H.-P."/>
            <person name="Fraser C.M."/>
            <person name="Smith H.O."/>
            <person name="Woese C.R."/>
            <person name="Venter J.C."/>
        </authorList>
    </citation>
    <scope>NUCLEOTIDE SEQUENCE [LARGE SCALE GENOMIC DNA]</scope>
    <source>
        <strain>ATCC 43067 / DSM 2661 / JAL-1 / JCM 10045 / NBRC 100440</strain>
    </source>
</reference>
<sequence>MNVKIIVEFIKKFAEENNCKKIAEIGIGFKFDVARELSKYFDLIAIDINEKAIEKAKLLGLNAYKDDLFNPNISLYKNIDLIYSIRPPRDLQPYILDLSKKVNANLIIRPLLNEMPIKELKLKNYKGEVFYIKEKQI</sequence>
<dbReference type="EMBL" id="L77117">
    <property type="protein sequence ID" value="AAB98683.1"/>
    <property type="status" value="ALT_INIT"/>
    <property type="molecule type" value="Genomic_DNA"/>
</dbReference>
<dbReference type="RefSeq" id="WP_064496579.1">
    <property type="nucleotide sequence ID" value="NC_000909.1"/>
</dbReference>
<dbReference type="SMR" id="Q58101"/>
<dbReference type="STRING" id="243232.MJ_0688"/>
<dbReference type="PaxDb" id="243232-MJ_0688"/>
<dbReference type="EnsemblBacteria" id="AAB98683">
    <property type="protein sequence ID" value="AAB98683"/>
    <property type="gene ID" value="MJ_0688"/>
</dbReference>
<dbReference type="GeneID" id="1451554"/>
<dbReference type="KEGG" id="mja:MJ_0688"/>
<dbReference type="eggNOG" id="arCOG04385">
    <property type="taxonomic scope" value="Archaea"/>
</dbReference>
<dbReference type="HOGENOM" id="CLU_148458_0_0_2"/>
<dbReference type="InParanoid" id="Q58101"/>
<dbReference type="OrthoDB" id="59816at2157"/>
<dbReference type="PhylomeDB" id="Q58101"/>
<dbReference type="Proteomes" id="UP000000805">
    <property type="component" value="Chromosome"/>
</dbReference>
<dbReference type="Gene3D" id="3.40.50.150">
    <property type="entry name" value="Vaccinia Virus protein VP39"/>
    <property type="match status" value="1"/>
</dbReference>
<dbReference type="HAMAP" id="MF_00341">
    <property type="entry name" value="UPF0146"/>
    <property type="match status" value="1"/>
</dbReference>
<dbReference type="InterPro" id="IPR029063">
    <property type="entry name" value="SAM-dependent_MTases_sf"/>
</dbReference>
<dbReference type="InterPro" id="IPR005353">
    <property type="entry name" value="UPF0146"/>
</dbReference>
<dbReference type="NCBIfam" id="NF003165">
    <property type="entry name" value="PRK04148.1"/>
    <property type="match status" value="1"/>
</dbReference>
<dbReference type="Pfam" id="PF03686">
    <property type="entry name" value="UPF0146"/>
    <property type="match status" value="1"/>
</dbReference>
<dbReference type="PIRSF" id="PIRSF016725">
    <property type="entry name" value="UCP016725"/>
    <property type="match status" value="1"/>
</dbReference>
<dbReference type="SUPFAM" id="SSF53335">
    <property type="entry name" value="S-adenosyl-L-methionine-dependent methyltransferases"/>
    <property type="match status" value="1"/>
</dbReference>
<name>Y688_METJA</name>
<gene>
    <name type="ordered locus">MJ0688</name>
</gene>
<accession>Q58101</accession>